<protein>
    <recommendedName>
        <fullName>Alpha-enolase</fullName>
        <ecNumber>4.2.1.11</ecNumber>
    </recommendedName>
    <alternativeName>
        <fullName>2-phospho-D-glycerate hydro-lyase</fullName>
    </alternativeName>
    <alternativeName>
        <fullName>Enolase 1</fullName>
    </alternativeName>
    <alternativeName>
        <fullName>Non-neural enolase</fullName>
        <shortName>NNE</shortName>
    </alternativeName>
</protein>
<proteinExistence type="evidence at transcript level"/>
<dbReference type="EC" id="4.2.1.11"/>
<dbReference type="EMBL" id="CR860345">
    <property type="protein sequence ID" value="CAH92479.1"/>
    <property type="molecule type" value="mRNA"/>
</dbReference>
<dbReference type="RefSeq" id="NP_001126461.1">
    <property type="nucleotide sequence ID" value="NM_001132989.1"/>
</dbReference>
<dbReference type="SMR" id="Q5R6Y1"/>
<dbReference type="STRING" id="9601.ENSPPYP00000002227"/>
<dbReference type="GeneID" id="100173448"/>
<dbReference type="KEGG" id="pon:100173448"/>
<dbReference type="CTD" id="2023"/>
<dbReference type="eggNOG" id="KOG2670">
    <property type="taxonomic scope" value="Eukaryota"/>
</dbReference>
<dbReference type="InParanoid" id="Q5R6Y1"/>
<dbReference type="OrthoDB" id="1739814at2759"/>
<dbReference type="UniPathway" id="UPA00109">
    <property type="reaction ID" value="UER00187"/>
</dbReference>
<dbReference type="Proteomes" id="UP000001595">
    <property type="component" value="Unplaced"/>
</dbReference>
<dbReference type="GO" id="GO:0000015">
    <property type="term" value="C:phosphopyruvate hydratase complex"/>
    <property type="evidence" value="ECO:0007669"/>
    <property type="project" value="InterPro"/>
</dbReference>
<dbReference type="GO" id="GO:0005886">
    <property type="term" value="C:plasma membrane"/>
    <property type="evidence" value="ECO:0007669"/>
    <property type="project" value="UniProtKB-SubCell"/>
</dbReference>
<dbReference type="GO" id="GO:0000287">
    <property type="term" value="F:magnesium ion binding"/>
    <property type="evidence" value="ECO:0007669"/>
    <property type="project" value="InterPro"/>
</dbReference>
<dbReference type="GO" id="GO:0004634">
    <property type="term" value="F:phosphopyruvate hydratase activity"/>
    <property type="evidence" value="ECO:0000250"/>
    <property type="project" value="UniProtKB"/>
</dbReference>
<dbReference type="GO" id="GO:0061621">
    <property type="term" value="P:canonical glycolysis"/>
    <property type="evidence" value="ECO:0000250"/>
    <property type="project" value="UniProtKB"/>
</dbReference>
<dbReference type="CDD" id="cd03313">
    <property type="entry name" value="enolase"/>
    <property type="match status" value="1"/>
</dbReference>
<dbReference type="FunFam" id="3.30.390.10:FF:000001">
    <property type="entry name" value="Enolase"/>
    <property type="match status" value="1"/>
</dbReference>
<dbReference type="FunFam" id="3.20.20.120:FF:000002">
    <property type="entry name" value="Enolase 1"/>
    <property type="match status" value="1"/>
</dbReference>
<dbReference type="Gene3D" id="3.20.20.120">
    <property type="entry name" value="Enolase-like C-terminal domain"/>
    <property type="match status" value="1"/>
</dbReference>
<dbReference type="Gene3D" id="3.30.390.10">
    <property type="entry name" value="Enolase-like, N-terminal domain"/>
    <property type="match status" value="1"/>
</dbReference>
<dbReference type="HAMAP" id="MF_00318">
    <property type="entry name" value="Enolase"/>
    <property type="match status" value="1"/>
</dbReference>
<dbReference type="InterPro" id="IPR000941">
    <property type="entry name" value="Enolase"/>
</dbReference>
<dbReference type="InterPro" id="IPR036849">
    <property type="entry name" value="Enolase-like_C_sf"/>
</dbReference>
<dbReference type="InterPro" id="IPR029017">
    <property type="entry name" value="Enolase-like_N"/>
</dbReference>
<dbReference type="InterPro" id="IPR020810">
    <property type="entry name" value="Enolase_C"/>
</dbReference>
<dbReference type="InterPro" id="IPR020811">
    <property type="entry name" value="Enolase_N"/>
</dbReference>
<dbReference type="NCBIfam" id="TIGR01060">
    <property type="entry name" value="eno"/>
    <property type="match status" value="1"/>
</dbReference>
<dbReference type="PANTHER" id="PTHR11902:SF12">
    <property type="entry name" value="ALPHA-ENOLASE"/>
    <property type="match status" value="1"/>
</dbReference>
<dbReference type="PANTHER" id="PTHR11902">
    <property type="entry name" value="ENOLASE"/>
    <property type="match status" value="1"/>
</dbReference>
<dbReference type="Pfam" id="PF00113">
    <property type="entry name" value="Enolase_C"/>
    <property type="match status" value="1"/>
</dbReference>
<dbReference type="Pfam" id="PF03952">
    <property type="entry name" value="Enolase_N"/>
    <property type="match status" value="1"/>
</dbReference>
<dbReference type="PIRSF" id="PIRSF001400">
    <property type="entry name" value="Enolase"/>
    <property type="match status" value="1"/>
</dbReference>
<dbReference type="PRINTS" id="PR00148">
    <property type="entry name" value="ENOLASE"/>
</dbReference>
<dbReference type="SFLD" id="SFLDS00001">
    <property type="entry name" value="Enolase"/>
    <property type="match status" value="1"/>
</dbReference>
<dbReference type="SFLD" id="SFLDF00002">
    <property type="entry name" value="enolase"/>
    <property type="match status" value="1"/>
</dbReference>
<dbReference type="SMART" id="SM01192">
    <property type="entry name" value="Enolase_C"/>
    <property type="match status" value="1"/>
</dbReference>
<dbReference type="SMART" id="SM01193">
    <property type="entry name" value="Enolase_N"/>
    <property type="match status" value="1"/>
</dbReference>
<dbReference type="SUPFAM" id="SSF51604">
    <property type="entry name" value="Enolase C-terminal domain-like"/>
    <property type="match status" value="1"/>
</dbReference>
<dbReference type="SUPFAM" id="SSF54826">
    <property type="entry name" value="Enolase N-terminal domain-like"/>
    <property type="match status" value="1"/>
</dbReference>
<name>ENOA_PONAB</name>
<keyword id="KW-0007">Acetylation</keyword>
<keyword id="KW-1003">Cell membrane</keyword>
<keyword id="KW-0963">Cytoplasm</keyword>
<keyword id="KW-0324">Glycolysis</keyword>
<keyword id="KW-0379">Hydroxylation</keyword>
<keyword id="KW-1017">Isopeptide bond</keyword>
<keyword id="KW-0456">Lyase</keyword>
<keyword id="KW-0460">Magnesium</keyword>
<keyword id="KW-0472">Membrane</keyword>
<keyword id="KW-0479">Metal-binding</keyword>
<keyword id="KW-0597">Phosphoprotein</keyword>
<keyword id="KW-1185">Reference proteome</keyword>
<keyword id="KW-0832">Ubl conjugation</keyword>
<reference key="1">
    <citation type="submission" date="2004-11" db="EMBL/GenBank/DDBJ databases">
        <authorList>
            <consortium name="The German cDNA consortium"/>
        </authorList>
    </citation>
    <scope>NUCLEOTIDE SEQUENCE [LARGE SCALE MRNA]</scope>
    <source>
        <tissue>Brain cortex</tissue>
    </source>
</reference>
<organism>
    <name type="scientific">Pongo abelii</name>
    <name type="common">Sumatran orangutan</name>
    <name type="synonym">Pongo pygmaeus abelii</name>
    <dbReference type="NCBI Taxonomy" id="9601"/>
    <lineage>
        <taxon>Eukaryota</taxon>
        <taxon>Metazoa</taxon>
        <taxon>Chordata</taxon>
        <taxon>Craniata</taxon>
        <taxon>Vertebrata</taxon>
        <taxon>Euteleostomi</taxon>
        <taxon>Mammalia</taxon>
        <taxon>Eutheria</taxon>
        <taxon>Euarchontoglires</taxon>
        <taxon>Primates</taxon>
        <taxon>Haplorrhini</taxon>
        <taxon>Catarrhini</taxon>
        <taxon>Hominidae</taxon>
        <taxon>Pongo</taxon>
    </lineage>
</organism>
<sequence length="434" mass="47197">MSILKIHAREIFDSRGNPTVEVDLFTSKGLFRAAVPSGASTGIYEALELRDNDKTRYMGKGVSKAVEHINKTIAPALVSKKLNVTEQEKIDKLMIEMDGTENKSKFGANAILGVSLAVCKAGAVEKGVPLYRHIADLAGNSEVILPVPAFNVINGGSHAGNKLAMQEFMILPVGAANFREAMRIGAEVYHNLKNVIKEKYGKDATNVGDEGGFAPNILENKEGLELLKTAIGKAGYTDKVVIGMDVAASEFFRSGKYDLDFKSPDDPSRYISPDQLADLYKSFIKDYPVVSIEDPFDQDDWGAWQKFTASAGIQVVGDDLTVTNPKRIAKAVNEKSCNCLLLKVNRIGSVTESLQACKLAQANGWGVMVSHRSGETEDTFIADLVVGLCTGQIKTGAPCRSERLAKYNQLLRIEEELGSKAKFAGRNFRNPLAK</sequence>
<evidence type="ECO:0000250" key="1"/>
<evidence type="ECO:0000250" key="2">
    <source>
        <dbReference type="UniProtKB" id="P00924"/>
    </source>
</evidence>
<evidence type="ECO:0000250" key="3">
    <source>
        <dbReference type="UniProtKB" id="P06733"/>
    </source>
</evidence>
<evidence type="ECO:0000250" key="4">
    <source>
        <dbReference type="UniProtKB" id="P17182"/>
    </source>
</evidence>
<evidence type="ECO:0000305" key="5"/>
<comment type="function">
    <text evidence="3">Glycolytic enzyme the catalyzes the conversion of 2-phosphoglycerate to phosphoenolpyruvate. In addition to glycolysis, involved in various processes such as growth control, hypoxia tolerance and allergic responses. May also function in the intravascular and pericellular fibrinolytic system due to its ability to serve as a receptor and activator of plasminogen on the cell surface of several cell-types such as leukocytes and neurons. Stimulates immunoglobulin production.</text>
</comment>
<comment type="catalytic activity">
    <reaction evidence="3">
        <text>(2R)-2-phosphoglycerate = phosphoenolpyruvate + H2O</text>
        <dbReference type="Rhea" id="RHEA:10164"/>
        <dbReference type="ChEBI" id="CHEBI:15377"/>
        <dbReference type="ChEBI" id="CHEBI:58289"/>
        <dbReference type="ChEBI" id="CHEBI:58702"/>
        <dbReference type="EC" id="4.2.1.11"/>
    </reaction>
</comment>
<comment type="cofactor">
    <cofactor evidence="3">
        <name>Mg(2+)</name>
        <dbReference type="ChEBI" id="CHEBI:18420"/>
    </cofactor>
    <text evidence="3">Binds two Mg(2+) per subunit. Required for catalysis and for stabilizing the dimer.</text>
</comment>
<comment type="pathway">
    <text>Carbohydrate degradation; glycolysis; pyruvate from D-glyceraldehyde 3-phosphate: step 4/5.</text>
</comment>
<comment type="subunit">
    <text evidence="3 4">Mammalian enolase is composed of 3 isozyme subunits, alpha, beta and gamma, which can form homodimers or heterodimers which are cell-type and development-specific. ENO1 interacts with PLG in the neuronal plasma membrane and promotes its activation. The C-terminal lysine is required for this binding. Interacts with ENO4 and PGAM2 (By similarity). Interacts with CMTM6 (By similarity).</text>
</comment>
<comment type="subcellular location">
    <subcellularLocation>
        <location evidence="1">Cytoplasm</location>
    </subcellularLocation>
    <subcellularLocation>
        <location evidence="1">Cell membrane</location>
    </subcellularLocation>
    <text evidence="1">Can translocate to the plasma membrane in either the homodimeric (alpha/alpha) or heterodimeric (alpha/gamma) form. ENO1 is localized to the M-band.</text>
</comment>
<comment type="PTM">
    <text evidence="3">ISGylated.</text>
</comment>
<comment type="PTM">
    <text evidence="3">Lysine 2-hydroxyisobutyrylation (Khib) by p300/EP300 activates the phosphopyruvate hydratase activity.</text>
</comment>
<comment type="similarity">
    <text evidence="5">Belongs to the enolase family.</text>
</comment>
<gene>
    <name type="primary">ENO1</name>
</gene>
<feature type="initiator methionine" description="Removed" evidence="3">
    <location>
        <position position="1"/>
    </location>
</feature>
<feature type="chain" id="PRO_0000290000" description="Alpha-enolase">
    <location>
        <begin position="2"/>
        <end position="434"/>
    </location>
</feature>
<feature type="region of interest" description="Required for interaction with PLG">
    <location>
        <begin position="405"/>
        <end position="434"/>
    </location>
</feature>
<feature type="active site" description="Proton donor" evidence="2">
    <location>
        <position position="210"/>
    </location>
</feature>
<feature type="active site" description="Proton acceptor" evidence="2">
    <location>
        <position position="343"/>
    </location>
</feature>
<feature type="binding site" evidence="3">
    <location>
        <position position="40"/>
    </location>
    <ligand>
        <name>Mg(2+)</name>
        <dbReference type="ChEBI" id="CHEBI:18420"/>
        <label>1</label>
    </ligand>
</feature>
<feature type="binding site" evidence="2">
    <location>
        <position position="158"/>
    </location>
    <ligand>
        <name>substrate</name>
    </ligand>
</feature>
<feature type="binding site" evidence="2">
    <location>
        <position position="167"/>
    </location>
    <ligand>
        <name>substrate</name>
    </ligand>
</feature>
<feature type="binding site" evidence="3">
    <location>
        <position position="245"/>
    </location>
    <ligand>
        <name>Mg(2+)</name>
        <dbReference type="ChEBI" id="CHEBI:18420"/>
        <label>2</label>
    </ligand>
</feature>
<feature type="binding site" evidence="3">
    <location>
        <position position="293"/>
    </location>
    <ligand>
        <name>Mg(2+)</name>
        <dbReference type="ChEBI" id="CHEBI:18420"/>
        <label>2</label>
    </ligand>
</feature>
<feature type="binding site" evidence="2">
    <location>
        <position position="293"/>
    </location>
    <ligand>
        <name>substrate</name>
    </ligand>
</feature>
<feature type="binding site" evidence="3">
    <location>
        <position position="318"/>
    </location>
    <ligand>
        <name>Mg(2+)</name>
        <dbReference type="ChEBI" id="CHEBI:18420"/>
        <label>2</label>
    </ligand>
</feature>
<feature type="binding site" evidence="2">
    <location>
        <position position="318"/>
    </location>
    <ligand>
        <name>substrate</name>
    </ligand>
</feature>
<feature type="binding site" evidence="2">
    <location>
        <begin position="370"/>
        <end position="373"/>
    </location>
    <ligand>
        <name>substrate</name>
    </ligand>
</feature>
<feature type="binding site" evidence="2">
    <location>
        <position position="394"/>
    </location>
    <ligand>
        <name>substrate</name>
    </ligand>
</feature>
<feature type="modified residue" description="N-acetylserine" evidence="3">
    <location>
        <position position="2"/>
    </location>
</feature>
<feature type="modified residue" description="N6-acetyllysine" evidence="3">
    <location>
        <position position="5"/>
    </location>
</feature>
<feature type="modified residue" description="Phosphoserine" evidence="3">
    <location>
        <position position="27"/>
    </location>
</feature>
<feature type="modified residue" description="Phosphotyrosine" evidence="3">
    <location>
        <position position="44"/>
    </location>
</feature>
<feature type="modified residue" description="N6-acetyllysine; alternate" evidence="4">
    <location>
        <position position="60"/>
    </location>
</feature>
<feature type="modified residue" description="N6-succinyllysine; alternate" evidence="4">
    <location>
        <position position="60"/>
    </location>
</feature>
<feature type="modified residue" description="N6-acetyllysine" evidence="3">
    <location>
        <position position="64"/>
    </location>
</feature>
<feature type="modified residue" description="N6-acetyllysine" evidence="3">
    <location>
        <position position="71"/>
    </location>
</feature>
<feature type="modified residue" description="N6-acetyllysine; alternate" evidence="3">
    <location>
        <position position="89"/>
    </location>
</feature>
<feature type="modified residue" description="N6-succinyllysine; alternate" evidence="4">
    <location>
        <position position="89"/>
    </location>
</feature>
<feature type="modified residue" description="N6-acetyllysine" evidence="4">
    <location>
        <position position="92"/>
    </location>
</feature>
<feature type="modified residue" description="N6-acetyllysine" evidence="3">
    <location>
        <position position="126"/>
    </location>
</feature>
<feature type="modified residue" description="N6-acetyllysine" evidence="3">
    <location>
        <position position="193"/>
    </location>
</feature>
<feature type="modified residue" description="N6-acetyllysine" evidence="3">
    <location>
        <position position="199"/>
    </location>
</feature>
<feature type="modified residue" description="N6-acetyllysine; alternate" evidence="4">
    <location>
        <position position="202"/>
    </location>
</feature>
<feature type="modified residue" description="N6-(2-hydroxyisobutyryl)lysine; alternate" evidence="3">
    <location>
        <position position="228"/>
    </location>
</feature>
<feature type="modified residue" description="N6-acetyllysine; alternate" evidence="3">
    <location>
        <position position="228"/>
    </location>
</feature>
<feature type="modified residue" description="N6-succinyllysine; alternate" evidence="4">
    <location>
        <position position="228"/>
    </location>
</feature>
<feature type="modified residue" description="N6-acetyllysine; alternate" evidence="3">
    <location>
        <position position="233"/>
    </location>
</feature>
<feature type="modified residue" description="N6-malonyllysine; alternate" evidence="1">
    <location>
        <position position="233"/>
    </location>
</feature>
<feature type="modified residue" description="Phosphoserine" evidence="3">
    <location>
        <position position="254"/>
    </location>
</feature>
<feature type="modified residue" description="N6-acetyllysine" evidence="3">
    <location>
        <position position="256"/>
    </location>
</feature>
<feature type="modified residue" description="Phosphoserine" evidence="3">
    <location>
        <position position="263"/>
    </location>
</feature>
<feature type="modified residue" description="Phosphoserine" evidence="3">
    <location>
        <position position="272"/>
    </location>
</feature>
<feature type="modified residue" description="N6-(2-hydroxyisobutyryl)lysine; alternate" evidence="3">
    <location>
        <position position="281"/>
    </location>
</feature>
<feature type="modified residue" description="N6-acetyllysine; alternate" evidence="3">
    <location>
        <position position="281"/>
    </location>
</feature>
<feature type="modified residue" description="N6-acetyllysine" evidence="3">
    <location>
        <position position="285"/>
    </location>
</feature>
<feature type="modified residue" description="Phosphotyrosine" evidence="3">
    <location>
        <position position="287"/>
    </location>
</feature>
<feature type="modified residue" description="Phosphoserine" evidence="3">
    <location>
        <position position="291"/>
    </location>
</feature>
<feature type="modified residue" description="N6-acetyllysine" evidence="4">
    <location>
        <position position="335"/>
    </location>
</feature>
<feature type="modified residue" description="N6-acetyllysine" evidence="4">
    <location>
        <position position="343"/>
    </location>
</feature>
<feature type="modified residue" description="N6-acetyllysine" evidence="4">
    <location>
        <position position="406"/>
    </location>
</feature>
<feature type="modified residue" description="N6-acetyllysine; alternate" evidence="3">
    <location>
        <position position="420"/>
    </location>
</feature>
<feature type="modified residue" description="N6-malonyllysine; alternate" evidence="1">
    <location>
        <position position="420"/>
    </location>
</feature>
<feature type="modified residue" description="N6-succinyllysine; alternate" evidence="4">
    <location>
        <position position="420"/>
    </location>
</feature>
<feature type="cross-link" description="Glycyl lysine isopeptide (Lys-Gly) (interchain with G-Cter in SUMO2); alternate" evidence="3">
    <location>
        <position position="202"/>
    </location>
</feature>
<accession>Q5R6Y1</accession>